<evidence type="ECO:0000250" key="1"/>
<evidence type="ECO:0000255" key="2">
    <source>
        <dbReference type="PROSITE-ProRule" id="PRU00406"/>
    </source>
</evidence>
<evidence type="ECO:0000256" key="3">
    <source>
        <dbReference type="SAM" id="MobiDB-lite"/>
    </source>
</evidence>
<evidence type="ECO:0000269" key="4">
    <source>
    </source>
</evidence>
<name>ACTOA_DICDI</name>
<proteinExistence type="evidence at transcript level"/>
<dbReference type="EMBL" id="AAFI02000005">
    <property type="protein sequence ID" value="EAL72792.1"/>
    <property type="molecule type" value="Genomic_DNA"/>
</dbReference>
<dbReference type="RefSeq" id="XP_646038.1">
    <property type="nucleotide sequence ID" value="XM_640946.1"/>
</dbReference>
<dbReference type="SMR" id="Q55DU3"/>
<dbReference type="PaxDb" id="44689-DDB0231649"/>
<dbReference type="EnsemblProtists" id="EAL72792">
    <property type="protein sequence ID" value="EAL72792"/>
    <property type="gene ID" value="DDB_G0270884"/>
</dbReference>
<dbReference type="GeneID" id="8616985"/>
<dbReference type="KEGG" id="ddi:DDB_G0270884"/>
<dbReference type="dictyBase" id="DDB_G0270884">
    <property type="gene designation" value="abnA"/>
</dbReference>
<dbReference type="VEuPathDB" id="AmoebaDB:DDB_G0270884"/>
<dbReference type="eggNOG" id="ENOG502SBN0">
    <property type="taxonomic scope" value="Eukaryota"/>
</dbReference>
<dbReference type="HOGENOM" id="CLU_175897_0_0_1"/>
<dbReference type="InParanoid" id="Q55DU3"/>
<dbReference type="OMA" id="VAKPHEL"/>
<dbReference type="PRO" id="PR:Q55DU3"/>
<dbReference type="Proteomes" id="UP000002195">
    <property type="component" value="Chromosome 1"/>
</dbReference>
<dbReference type="GO" id="GO:0003779">
    <property type="term" value="F:actin binding"/>
    <property type="evidence" value="ECO:0000250"/>
    <property type="project" value="dictyBase"/>
</dbReference>
<dbReference type="CDD" id="cd22063">
    <property type="entry name" value="WH2_Actobindin"/>
    <property type="match status" value="1"/>
</dbReference>
<dbReference type="InterPro" id="IPR016365">
    <property type="entry name" value="Actobindin"/>
</dbReference>
<dbReference type="InterPro" id="IPR003124">
    <property type="entry name" value="WH2_dom"/>
</dbReference>
<dbReference type="Pfam" id="PF02205">
    <property type="entry name" value="WH2"/>
    <property type="match status" value="2"/>
</dbReference>
<dbReference type="PIRSF" id="PIRSF002724">
    <property type="entry name" value="Actobindin"/>
    <property type="match status" value="1"/>
</dbReference>
<dbReference type="SMART" id="SM00246">
    <property type="entry name" value="WH2"/>
    <property type="match status" value="2"/>
</dbReference>
<dbReference type="PROSITE" id="PS51082">
    <property type="entry name" value="WH2"/>
    <property type="match status" value="2"/>
</dbReference>
<feature type="chain" id="PRO_0000383094" description="Actobindin-A">
    <location>
        <begin position="1"/>
        <end position="92"/>
    </location>
</feature>
<feature type="domain" description="WH2 1" evidence="2">
    <location>
        <begin position="3"/>
        <end position="20"/>
    </location>
</feature>
<feature type="domain" description="WH2 2" evidence="2">
    <location>
        <begin position="40"/>
        <end position="57"/>
    </location>
</feature>
<feature type="region of interest" description="Disordered" evidence="3">
    <location>
        <begin position="1"/>
        <end position="33"/>
    </location>
</feature>
<feature type="region of interest" description="Disordered" evidence="3">
    <location>
        <begin position="54"/>
        <end position="92"/>
    </location>
</feature>
<feature type="compositionally biased region" description="Basic and acidic residues" evidence="3">
    <location>
        <begin position="13"/>
        <end position="33"/>
    </location>
</feature>
<feature type="compositionally biased region" description="Basic and acidic residues" evidence="3">
    <location>
        <begin position="54"/>
        <end position="64"/>
    </location>
</feature>
<feature type="compositionally biased region" description="Polar residues" evidence="3">
    <location>
        <begin position="68"/>
        <end position="79"/>
    </location>
</feature>
<accession>Q55DU3</accession>
<keyword id="KW-0009">Actin-binding</keyword>
<keyword id="KW-1185">Reference proteome</keyword>
<keyword id="KW-0677">Repeat</keyword>
<gene>
    <name type="primary">abnA</name>
    <name type="ORF">DDB_G0270884</name>
</gene>
<sequence>MSAPNPLLAEINKGADLKHTETQDKSAPKIGSDVHIKKNDHASLLSEVEQGAKLKHAETDDKSAPKINENTTIKPNNHSALLGEIKAKAADS</sequence>
<reference key="1">
    <citation type="journal article" date="2005" name="Nature">
        <title>The genome of the social amoeba Dictyostelium discoideum.</title>
        <authorList>
            <person name="Eichinger L."/>
            <person name="Pachebat J.A."/>
            <person name="Gloeckner G."/>
            <person name="Rajandream M.A."/>
            <person name="Sucgang R."/>
            <person name="Berriman M."/>
            <person name="Song J."/>
            <person name="Olsen R."/>
            <person name="Szafranski K."/>
            <person name="Xu Q."/>
            <person name="Tunggal B."/>
            <person name="Kummerfeld S."/>
            <person name="Madera M."/>
            <person name="Konfortov B.A."/>
            <person name="Rivero F."/>
            <person name="Bankier A.T."/>
            <person name="Lehmann R."/>
            <person name="Hamlin N."/>
            <person name="Davies R."/>
            <person name="Gaudet P."/>
            <person name="Fey P."/>
            <person name="Pilcher K."/>
            <person name="Chen G."/>
            <person name="Saunders D."/>
            <person name="Sodergren E.J."/>
            <person name="Davis P."/>
            <person name="Kerhornou A."/>
            <person name="Nie X."/>
            <person name="Hall N."/>
            <person name="Anjard C."/>
            <person name="Hemphill L."/>
            <person name="Bason N."/>
            <person name="Farbrother P."/>
            <person name="Desany B."/>
            <person name="Just E."/>
            <person name="Morio T."/>
            <person name="Rost R."/>
            <person name="Churcher C.M."/>
            <person name="Cooper J."/>
            <person name="Haydock S."/>
            <person name="van Driessche N."/>
            <person name="Cronin A."/>
            <person name="Goodhead I."/>
            <person name="Muzny D.M."/>
            <person name="Mourier T."/>
            <person name="Pain A."/>
            <person name="Lu M."/>
            <person name="Harper D."/>
            <person name="Lindsay R."/>
            <person name="Hauser H."/>
            <person name="James K.D."/>
            <person name="Quiles M."/>
            <person name="Madan Babu M."/>
            <person name="Saito T."/>
            <person name="Buchrieser C."/>
            <person name="Wardroper A."/>
            <person name="Felder M."/>
            <person name="Thangavelu M."/>
            <person name="Johnson D."/>
            <person name="Knights A."/>
            <person name="Loulseged H."/>
            <person name="Mungall K.L."/>
            <person name="Oliver K."/>
            <person name="Price C."/>
            <person name="Quail M.A."/>
            <person name="Urushihara H."/>
            <person name="Hernandez J."/>
            <person name="Rabbinowitsch E."/>
            <person name="Steffen D."/>
            <person name="Sanders M."/>
            <person name="Ma J."/>
            <person name="Kohara Y."/>
            <person name="Sharp S."/>
            <person name="Simmonds M.N."/>
            <person name="Spiegler S."/>
            <person name="Tivey A."/>
            <person name="Sugano S."/>
            <person name="White B."/>
            <person name="Walker D."/>
            <person name="Woodward J.R."/>
            <person name="Winckler T."/>
            <person name="Tanaka Y."/>
            <person name="Shaulsky G."/>
            <person name="Schleicher M."/>
            <person name="Weinstock G.M."/>
            <person name="Rosenthal A."/>
            <person name="Cox E.C."/>
            <person name="Chisholm R.L."/>
            <person name="Gibbs R.A."/>
            <person name="Loomis W.F."/>
            <person name="Platzer M."/>
            <person name="Kay R.R."/>
            <person name="Williams J.G."/>
            <person name="Dear P.H."/>
            <person name="Noegel A.A."/>
            <person name="Barrell B.G."/>
            <person name="Kuspa A."/>
        </authorList>
    </citation>
    <scope>NUCLEOTIDE SEQUENCE [LARGE SCALE GENOMIC DNA]</scope>
    <source>
        <strain>AX4</strain>
    </source>
</reference>
<reference key="2">
    <citation type="journal article" date="2008" name="BMC Genomics">
        <title>Genome-wide transcriptional changes induced by phagocytosis or growth on bacteria in Dictyostelium.</title>
        <authorList>
            <person name="Sillo A."/>
            <person name="Bloomfield G."/>
            <person name="Balest A."/>
            <person name="Balbo A."/>
            <person name="Pergolizzi B."/>
            <person name="Peracino B."/>
            <person name="Skelton J."/>
            <person name="Ivens A."/>
            <person name="Bozzaro S."/>
        </authorList>
    </citation>
    <scope>INDUCTION [LARGE SCALE ANALYSIS]</scope>
</reference>
<organism>
    <name type="scientific">Dictyostelium discoideum</name>
    <name type="common">Social amoeba</name>
    <dbReference type="NCBI Taxonomy" id="44689"/>
    <lineage>
        <taxon>Eukaryota</taxon>
        <taxon>Amoebozoa</taxon>
        <taxon>Evosea</taxon>
        <taxon>Eumycetozoa</taxon>
        <taxon>Dictyostelia</taxon>
        <taxon>Dictyosteliales</taxon>
        <taxon>Dictyosteliaceae</taxon>
        <taxon>Dictyostelium</taxon>
    </lineage>
</organism>
<comment type="function">
    <text evidence="1">Is able to bind two actin monomers at high concentrations of G-actin. Inhibits actin polymerization by sequestering G-actin and stabilizing actin dimers (By similarity).</text>
</comment>
<comment type="subunit">
    <text evidence="1">Monomer.</text>
</comment>
<comment type="induction">
    <text evidence="4">Down-regulated by phagocytic stimuli.</text>
</comment>
<protein>
    <recommendedName>
        <fullName>Actobindin-A</fullName>
    </recommendedName>
</protein>